<accession>P49811</accession>
<keyword id="KW-0007">Acetylation</keyword>
<keyword id="KW-0010">Activator</keyword>
<keyword id="KW-0217">Developmental protein</keyword>
<keyword id="KW-0221">Differentiation</keyword>
<keyword id="KW-0238">DNA-binding</keyword>
<keyword id="KW-0488">Methylation</keyword>
<keyword id="KW-0517">Myogenesis</keyword>
<keyword id="KW-0539">Nucleus</keyword>
<keyword id="KW-0597">Phosphoprotein</keyword>
<keyword id="KW-1185">Reference proteome</keyword>
<keyword id="KW-0804">Transcription</keyword>
<keyword id="KW-0805">Transcription regulation</keyword>
<keyword id="KW-0832">Ubl conjugation</keyword>
<comment type="function">
    <text evidence="1">Acts as a transcriptional activator that promotes transcription of muscle-specific target genes and plays a role in muscle differentiation. Together with MYF5 and MYOG, co-occupies muscle-specific gene promoter core region during myogenesis. Induces fibroblasts to differentiate into myoblasts. Interacts with and is inhibited by the twist protein. This interaction probably involves the basic domains of both proteins (By similarity).</text>
</comment>
<comment type="subunit">
    <text evidence="2 4">Efficient DNA binding requires dimerization with another bHLH protein. Seems to form active heterodimers with ITF-2. Interacts with SUV39H1. Interacts with DDX5. Interacts with CHD2. Interacts with TSC22D3 (By similarity). Interacts with SETD3 (By similarity). Interacts with P-TEFB complex; promotes the transcriptional activity of MYOD1 through its CDK9-mediated phosphorylation (By similarity). Interacts with CSRP3 (By similarity). Interacts with NUPR1 (By similarity).</text>
</comment>
<comment type="subcellular location">
    <subcellularLocation>
        <location>Nucleus</location>
    </subcellularLocation>
</comment>
<comment type="PTM">
    <text evidence="1">Phosphorylated by CDK9. This phosphorylation promotes its function in muscle differentiation (By similarity).</text>
</comment>
<comment type="PTM">
    <text evidence="1">Acetylated by a complex containing EP300 and PCAF. The acetylation is essential to activate target genes. Conversely, its deacetylation by SIRT1 inhibits its function (By similarity).</text>
</comment>
<comment type="PTM">
    <text evidence="1">Ubiquitinated on the N-terminus; which is required for proteasomal degradation.</text>
</comment>
<comment type="PTM">
    <text evidence="1">Methylation at Lys-104 by EHMT2/G9a inhibits myogenic activity.</text>
</comment>
<dbReference type="EMBL" id="U12574">
    <property type="protein sequence ID" value="AAA87061.1"/>
    <property type="molecule type" value="Genomic_DNA"/>
</dbReference>
<dbReference type="RefSeq" id="NP_001002824.1">
    <property type="nucleotide sequence ID" value="NM_001002824.1"/>
</dbReference>
<dbReference type="SMR" id="P49811"/>
<dbReference type="FunCoup" id="P49811">
    <property type="interactions" value="82"/>
</dbReference>
<dbReference type="STRING" id="9823.ENSSSCP00000014214"/>
<dbReference type="GlyGen" id="P49811">
    <property type="glycosylation" value="1 site"/>
</dbReference>
<dbReference type="PaxDb" id="9823-ENSSSCP00000014214"/>
<dbReference type="GeneID" id="407604"/>
<dbReference type="KEGG" id="ssc:407604"/>
<dbReference type="CTD" id="4654"/>
<dbReference type="eggNOG" id="KOG3960">
    <property type="taxonomic scope" value="Eukaryota"/>
</dbReference>
<dbReference type="InParanoid" id="P49811"/>
<dbReference type="OrthoDB" id="10049614at2759"/>
<dbReference type="Proteomes" id="UP000008227">
    <property type="component" value="Unplaced"/>
</dbReference>
<dbReference type="Proteomes" id="UP000314985">
    <property type="component" value="Unplaced"/>
</dbReference>
<dbReference type="Proteomes" id="UP000694570">
    <property type="component" value="Unplaced"/>
</dbReference>
<dbReference type="Proteomes" id="UP000694571">
    <property type="component" value="Unplaced"/>
</dbReference>
<dbReference type="Proteomes" id="UP000694720">
    <property type="component" value="Unplaced"/>
</dbReference>
<dbReference type="Proteomes" id="UP000694722">
    <property type="component" value="Unplaced"/>
</dbReference>
<dbReference type="Proteomes" id="UP000694723">
    <property type="component" value="Unplaced"/>
</dbReference>
<dbReference type="Proteomes" id="UP000694724">
    <property type="component" value="Unplaced"/>
</dbReference>
<dbReference type="Proteomes" id="UP000694725">
    <property type="component" value="Unplaced"/>
</dbReference>
<dbReference type="Proteomes" id="UP000694726">
    <property type="component" value="Unplaced"/>
</dbReference>
<dbReference type="Proteomes" id="UP000694727">
    <property type="component" value="Unplaced"/>
</dbReference>
<dbReference type="Proteomes" id="UP000694728">
    <property type="component" value="Unplaced"/>
</dbReference>
<dbReference type="GO" id="GO:0005634">
    <property type="term" value="C:nucleus"/>
    <property type="evidence" value="ECO:0000250"/>
    <property type="project" value="UniProtKB"/>
</dbReference>
<dbReference type="GO" id="GO:0005667">
    <property type="term" value="C:transcription regulator complex"/>
    <property type="evidence" value="ECO:0000250"/>
    <property type="project" value="AgBase"/>
</dbReference>
<dbReference type="GO" id="GO:0043425">
    <property type="term" value="F:bHLH transcription factor binding"/>
    <property type="evidence" value="ECO:0000250"/>
    <property type="project" value="AgBase"/>
</dbReference>
<dbReference type="GO" id="GO:0003682">
    <property type="term" value="F:chromatin binding"/>
    <property type="evidence" value="ECO:0000250"/>
    <property type="project" value="UniProtKB"/>
</dbReference>
<dbReference type="GO" id="GO:0001216">
    <property type="term" value="F:DNA-binding transcription activator activity"/>
    <property type="evidence" value="ECO:0000250"/>
    <property type="project" value="UniProtKB"/>
</dbReference>
<dbReference type="GO" id="GO:0003700">
    <property type="term" value="F:DNA-binding transcription factor activity"/>
    <property type="evidence" value="ECO:0000250"/>
    <property type="project" value="AgBase"/>
</dbReference>
<dbReference type="GO" id="GO:0000981">
    <property type="term" value="F:DNA-binding transcription factor activity, RNA polymerase II-specific"/>
    <property type="evidence" value="ECO:0000318"/>
    <property type="project" value="GO_Central"/>
</dbReference>
<dbReference type="GO" id="GO:0070888">
    <property type="term" value="F:E-box binding"/>
    <property type="evidence" value="ECO:0000250"/>
    <property type="project" value="UniProtKB"/>
</dbReference>
<dbReference type="GO" id="GO:1990841">
    <property type="term" value="F:promoter-specific chromatin binding"/>
    <property type="evidence" value="ECO:0000250"/>
    <property type="project" value="UniProtKB"/>
</dbReference>
<dbReference type="GO" id="GO:0046983">
    <property type="term" value="F:protein dimerization activity"/>
    <property type="evidence" value="ECO:0007669"/>
    <property type="project" value="InterPro"/>
</dbReference>
<dbReference type="GO" id="GO:0000978">
    <property type="term" value="F:RNA polymerase II cis-regulatory region sequence-specific DNA binding"/>
    <property type="evidence" value="ECO:0000318"/>
    <property type="project" value="GO_Central"/>
</dbReference>
<dbReference type="GO" id="GO:0071392">
    <property type="term" value="P:cellular response to estradiol stimulus"/>
    <property type="evidence" value="ECO:0000250"/>
    <property type="project" value="UniProtKB"/>
</dbReference>
<dbReference type="GO" id="GO:0006351">
    <property type="term" value="P:DNA-templated transcription"/>
    <property type="evidence" value="ECO:0000250"/>
    <property type="project" value="AgBase"/>
</dbReference>
<dbReference type="GO" id="GO:0007517">
    <property type="term" value="P:muscle organ development"/>
    <property type="evidence" value="ECO:0000250"/>
    <property type="project" value="AgBase"/>
</dbReference>
<dbReference type="GO" id="GO:0045445">
    <property type="term" value="P:myoblast differentiation"/>
    <property type="evidence" value="ECO:0000250"/>
    <property type="project" value="UniProtKB"/>
</dbReference>
<dbReference type="GO" id="GO:0007518">
    <property type="term" value="P:myoblast fate determination"/>
    <property type="evidence" value="ECO:0000250"/>
    <property type="project" value="UniProtKB"/>
</dbReference>
<dbReference type="GO" id="GO:0051149">
    <property type="term" value="P:positive regulation of muscle cell differentiation"/>
    <property type="evidence" value="ECO:0000250"/>
    <property type="project" value="UniProtKB"/>
</dbReference>
<dbReference type="GO" id="GO:0045663">
    <property type="term" value="P:positive regulation of myoblast differentiation"/>
    <property type="evidence" value="ECO:0000318"/>
    <property type="project" value="GO_Central"/>
</dbReference>
<dbReference type="GO" id="GO:0048743">
    <property type="term" value="P:positive regulation of skeletal muscle fiber development"/>
    <property type="evidence" value="ECO:0000318"/>
    <property type="project" value="GO_Central"/>
</dbReference>
<dbReference type="GO" id="GO:0043415">
    <property type="term" value="P:positive regulation of skeletal muscle tissue regeneration"/>
    <property type="evidence" value="ECO:0000250"/>
    <property type="project" value="UniProtKB"/>
</dbReference>
<dbReference type="GO" id="GO:1905382">
    <property type="term" value="P:positive regulation of snRNA transcription by RNA polymerase II"/>
    <property type="evidence" value="ECO:0000250"/>
    <property type="project" value="UniProtKB"/>
</dbReference>
<dbReference type="GO" id="GO:0045944">
    <property type="term" value="P:positive regulation of transcription by RNA polymerase II"/>
    <property type="evidence" value="ECO:0000250"/>
    <property type="project" value="UniProtKB"/>
</dbReference>
<dbReference type="GO" id="GO:0000381">
    <property type="term" value="P:regulation of alternative mRNA splicing, via spliceosome"/>
    <property type="evidence" value="ECO:0000250"/>
    <property type="project" value="UniProtKB"/>
</dbReference>
<dbReference type="GO" id="GO:0006357">
    <property type="term" value="P:regulation of transcription by RNA polymerase II"/>
    <property type="evidence" value="ECO:0000318"/>
    <property type="project" value="GO_Central"/>
</dbReference>
<dbReference type="GO" id="GO:0035914">
    <property type="term" value="P:skeletal muscle cell differentiation"/>
    <property type="evidence" value="ECO:0000318"/>
    <property type="project" value="GO_Central"/>
</dbReference>
<dbReference type="GO" id="GO:0007519">
    <property type="term" value="P:skeletal muscle tissue development"/>
    <property type="evidence" value="ECO:0000250"/>
    <property type="project" value="UniProtKB"/>
</dbReference>
<dbReference type="GO" id="GO:0051146">
    <property type="term" value="P:striated muscle cell differentiation"/>
    <property type="evidence" value="ECO:0000250"/>
    <property type="project" value="UniProtKB"/>
</dbReference>
<dbReference type="CDD" id="cd18936">
    <property type="entry name" value="bHLH_TS_MYOD1_Myf3"/>
    <property type="match status" value="1"/>
</dbReference>
<dbReference type="FunFam" id="4.10.280.10:FF:000005">
    <property type="entry name" value="Myogenic factor"/>
    <property type="match status" value="1"/>
</dbReference>
<dbReference type="Gene3D" id="4.10.280.10">
    <property type="entry name" value="Helix-loop-helix DNA-binding domain"/>
    <property type="match status" value="1"/>
</dbReference>
<dbReference type="InterPro" id="IPR011598">
    <property type="entry name" value="bHLH_dom"/>
</dbReference>
<dbReference type="InterPro" id="IPR036638">
    <property type="entry name" value="HLH_DNA-bd_sf"/>
</dbReference>
<dbReference type="InterPro" id="IPR022032">
    <property type="entry name" value="Myf5"/>
</dbReference>
<dbReference type="InterPro" id="IPR002546">
    <property type="entry name" value="MyoD_N"/>
</dbReference>
<dbReference type="InterPro" id="IPR039704">
    <property type="entry name" value="Myogenic_factor"/>
</dbReference>
<dbReference type="PANTHER" id="PTHR11534:SF2">
    <property type="entry name" value="MYOBLAST DETERMINATION PROTEIN 1"/>
    <property type="match status" value="1"/>
</dbReference>
<dbReference type="PANTHER" id="PTHR11534">
    <property type="entry name" value="MYOGENIC FACTOR"/>
    <property type="match status" value="1"/>
</dbReference>
<dbReference type="Pfam" id="PF01586">
    <property type="entry name" value="Basic"/>
    <property type="match status" value="1"/>
</dbReference>
<dbReference type="Pfam" id="PF00010">
    <property type="entry name" value="HLH"/>
    <property type="match status" value="1"/>
</dbReference>
<dbReference type="Pfam" id="PF12232">
    <property type="entry name" value="Myf5"/>
    <property type="match status" value="1"/>
</dbReference>
<dbReference type="SMART" id="SM00520">
    <property type="entry name" value="BASIC"/>
    <property type="match status" value="1"/>
</dbReference>
<dbReference type="SMART" id="SM00353">
    <property type="entry name" value="HLH"/>
    <property type="match status" value="1"/>
</dbReference>
<dbReference type="SUPFAM" id="SSF47459">
    <property type="entry name" value="HLH, helix-loop-helix DNA-binding domain"/>
    <property type="match status" value="1"/>
</dbReference>
<dbReference type="PROSITE" id="PS50888">
    <property type="entry name" value="BHLH"/>
    <property type="match status" value="1"/>
</dbReference>
<name>MYOD1_PIG</name>
<feature type="chain" id="PRO_0000127362" description="Myoblast determination protein 1">
    <location>
        <begin position="1"/>
        <end position="319"/>
    </location>
</feature>
<feature type="domain" description="bHLH" evidence="5">
    <location>
        <begin position="109"/>
        <end position="160"/>
    </location>
</feature>
<feature type="region of interest" description="Disordered" evidence="6">
    <location>
        <begin position="174"/>
        <end position="221"/>
    </location>
</feature>
<feature type="region of interest" description="Disordered" evidence="6">
    <location>
        <begin position="266"/>
        <end position="319"/>
    </location>
</feature>
<feature type="compositionally biased region" description="Polar residues" evidence="6">
    <location>
        <begin position="197"/>
        <end position="207"/>
    </location>
</feature>
<feature type="compositionally biased region" description="Polar residues" evidence="6">
    <location>
        <begin position="308"/>
        <end position="319"/>
    </location>
</feature>
<feature type="modified residue" description="N6-methyllysine; by EHMT2" evidence="3">
    <location>
        <position position="104"/>
    </location>
</feature>
<feature type="cross-link" description="Peptide (Met-Gly) (interchain with G-Cter in ubiquitin)" evidence="1">
    <location>
        <position position="1"/>
    </location>
</feature>
<reference key="1">
    <citation type="journal article" date="1995" name="J. Muscle Res. Cell Motil.">
        <title>Cloning and in vivo expression of the pig MyoD gene.</title>
        <authorList>
            <person name="Chang K.C."/>
            <person name="Fernandes K."/>
            <person name="Chantler P.D."/>
        </authorList>
    </citation>
    <scope>NUCLEOTIDE SEQUENCE [GENOMIC DNA]</scope>
    <source>
        <strain>Large white X Landrace</strain>
    </source>
</reference>
<sequence>MELLSPPLRDVDLTGPDGSLCNFATADDFYDDPCFDSPDLRFFEDLDPRLVHVGALLKPEEHSHFPAAAHPAPGAREDEHVRAPSGHHQAGRCLLWACKACKRKTTNADRRKAATMRERRRLSKVNEAFETLKRCTSSNPNQRLPKVEILRNAIRYIEGLQALLRDQDAAPPGAAAAFYAPGPLPPGRGGEHYSGDSDASSPRSNCSDGMMDYSGPPSGARRRNCYDGTYYSEAPSEPRPGKNAAVSSLDCLSSIVESISTESPAAPALLLADTPRESSPGPQEAAAGSEVERGTPTPSPDAAPQCPASANPNPIYQVL</sequence>
<gene>
    <name type="primary">MYOD1</name>
    <name type="synonym">MYOD</name>
</gene>
<protein>
    <recommendedName>
        <fullName>Myoblast determination protein 1</fullName>
    </recommendedName>
</protein>
<evidence type="ECO:0000250" key="1"/>
<evidence type="ECO:0000250" key="2">
    <source>
        <dbReference type="UniProtKB" id="P10085"/>
    </source>
</evidence>
<evidence type="ECO:0000250" key="3">
    <source>
        <dbReference type="UniProtKB" id="P15172"/>
    </source>
</evidence>
<evidence type="ECO:0000250" key="4">
    <source>
        <dbReference type="UniProtKB" id="Q02346"/>
    </source>
</evidence>
<evidence type="ECO:0000255" key="5">
    <source>
        <dbReference type="PROSITE-ProRule" id="PRU00981"/>
    </source>
</evidence>
<evidence type="ECO:0000256" key="6">
    <source>
        <dbReference type="SAM" id="MobiDB-lite"/>
    </source>
</evidence>
<organism>
    <name type="scientific">Sus scrofa</name>
    <name type="common">Pig</name>
    <dbReference type="NCBI Taxonomy" id="9823"/>
    <lineage>
        <taxon>Eukaryota</taxon>
        <taxon>Metazoa</taxon>
        <taxon>Chordata</taxon>
        <taxon>Craniata</taxon>
        <taxon>Vertebrata</taxon>
        <taxon>Euteleostomi</taxon>
        <taxon>Mammalia</taxon>
        <taxon>Eutheria</taxon>
        <taxon>Laurasiatheria</taxon>
        <taxon>Artiodactyla</taxon>
        <taxon>Suina</taxon>
        <taxon>Suidae</taxon>
        <taxon>Sus</taxon>
    </lineage>
</organism>
<proteinExistence type="inferred from homology"/>